<gene>
    <name evidence="1" type="primary">serS</name>
    <name type="ordered locus">TSIB_1397</name>
</gene>
<comment type="function">
    <text evidence="1">Catalyzes the attachment of serine to tRNA(Ser). Is also able to aminoacylate tRNA(Sec) with serine, to form the misacylated tRNA L-seryl-tRNA(Sec), which will be further converted into selenocysteinyl-tRNA(Sec).</text>
</comment>
<comment type="catalytic activity">
    <reaction evidence="1">
        <text>tRNA(Ser) + L-serine + ATP = L-seryl-tRNA(Ser) + AMP + diphosphate + H(+)</text>
        <dbReference type="Rhea" id="RHEA:12292"/>
        <dbReference type="Rhea" id="RHEA-COMP:9669"/>
        <dbReference type="Rhea" id="RHEA-COMP:9703"/>
        <dbReference type="ChEBI" id="CHEBI:15378"/>
        <dbReference type="ChEBI" id="CHEBI:30616"/>
        <dbReference type="ChEBI" id="CHEBI:33019"/>
        <dbReference type="ChEBI" id="CHEBI:33384"/>
        <dbReference type="ChEBI" id="CHEBI:78442"/>
        <dbReference type="ChEBI" id="CHEBI:78533"/>
        <dbReference type="ChEBI" id="CHEBI:456215"/>
        <dbReference type="EC" id="6.1.1.11"/>
    </reaction>
</comment>
<comment type="catalytic activity">
    <reaction evidence="1">
        <text>tRNA(Sec) + L-serine + ATP = L-seryl-tRNA(Sec) + AMP + diphosphate + H(+)</text>
        <dbReference type="Rhea" id="RHEA:42580"/>
        <dbReference type="Rhea" id="RHEA-COMP:9742"/>
        <dbReference type="Rhea" id="RHEA-COMP:10128"/>
        <dbReference type="ChEBI" id="CHEBI:15378"/>
        <dbReference type="ChEBI" id="CHEBI:30616"/>
        <dbReference type="ChEBI" id="CHEBI:33019"/>
        <dbReference type="ChEBI" id="CHEBI:33384"/>
        <dbReference type="ChEBI" id="CHEBI:78442"/>
        <dbReference type="ChEBI" id="CHEBI:78533"/>
        <dbReference type="ChEBI" id="CHEBI:456215"/>
        <dbReference type="EC" id="6.1.1.11"/>
    </reaction>
</comment>
<comment type="pathway">
    <text evidence="1">Aminoacyl-tRNA biosynthesis; selenocysteinyl-tRNA(Sec) biosynthesis; L-seryl-tRNA(Sec) from L-serine and tRNA(Sec): step 1/1.</text>
</comment>
<comment type="subunit">
    <text evidence="1">Homodimer. The tRNA molecule binds across the dimer.</text>
</comment>
<comment type="subcellular location">
    <subcellularLocation>
        <location evidence="1">Cytoplasm</location>
    </subcellularLocation>
</comment>
<comment type="domain">
    <text evidence="1">Consists of two distinct domains, a catalytic core and a N-terminal extension that is involved in tRNA binding.</text>
</comment>
<comment type="similarity">
    <text evidence="1">Belongs to the class-II aminoacyl-tRNA synthetase family. Type-1 seryl-tRNA synthetase subfamily.</text>
</comment>
<organism>
    <name type="scientific">Thermococcus sibiricus (strain DSM 12597 / MM 739)</name>
    <dbReference type="NCBI Taxonomy" id="604354"/>
    <lineage>
        <taxon>Archaea</taxon>
        <taxon>Methanobacteriati</taxon>
        <taxon>Methanobacteriota</taxon>
        <taxon>Thermococci</taxon>
        <taxon>Thermococcales</taxon>
        <taxon>Thermococcaceae</taxon>
        <taxon>Thermococcus</taxon>
    </lineage>
</organism>
<reference key="1">
    <citation type="journal article" date="2009" name="Appl. Environ. Microbiol.">
        <title>Metabolic versatility and indigenous origin of the archaeon Thermococcus sibiricus, isolated from a siberian oil reservoir, as revealed by genome analysis.</title>
        <authorList>
            <person name="Mardanov A.V."/>
            <person name="Ravin N.V."/>
            <person name="Svetlitchnyi V.A."/>
            <person name="Beletsky A.V."/>
            <person name="Miroshnichenko M.L."/>
            <person name="Bonch-Osmolovskaya E.A."/>
            <person name="Skryabin K.G."/>
        </authorList>
    </citation>
    <scope>NUCLEOTIDE SEQUENCE [LARGE SCALE GENOMIC DNA]</scope>
    <source>
        <strain>DSM 12597 / MM 739</strain>
    </source>
</reference>
<feature type="chain" id="PRO_1000203777" description="Serine--tRNA ligase">
    <location>
        <begin position="1"/>
        <end position="455"/>
    </location>
</feature>
<feature type="binding site" evidence="1">
    <location>
        <begin position="252"/>
        <end position="254"/>
    </location>
    <ligand>
        <name>L-serine</name>
        <dbReference type="ChEBI" id="CHEBI:33384"/>
    </ligand>
</feature>
<feature type="binding site" evidence="1">
    <location>
        <begin position="283"/>
        <end position="285"/>
    </location>
    <ligand>
        <name>ATP</name>
        <dbReference type="ChEBI" id="CHEBI:30616"/>
    </ligand>
</feature>
<feature type="binding site" evidence="1">
    <location>
        <position position="299"/>
    </location>
    <ligand>
        <name>ATP</name>
        <dbReference type="ChEBI" id="CHEBI:30616"/>
    </ligand>
</feature>
<feature type="binding site" evidence="1">
    <location>
        <position position="306"/>
    </location>
    <ligand>
        <name>L-serine</name>
        <dbReference type="ChEBI" id="CHEBI:33384"/>
    </ligand>
</feature>
<feature type="binding site" evidence="1">
    <location>
        <begin position="370"/>
        <end position="373"/>
    </location>
    <ligand>
        <name>ATP</name>
        <dbReference type="ChEBI" id="CHEBI:30616"/>
    </ligand>
</feature>
<feature type="binding site" evidence="1">
    <location>
        <position position="406"/>
    </location>
    <ligand>
        <name>L-serine</name>
        <dbReference type="ChEBI" id="CHEBI:33384"/>
    </ligand>
</feature>
<dbReference type="EC" id="6.1.1.11" evidence="1"/>
<dbReference type="EMBL" id="CP001463">
    <property type="protein sequence ID" value="ACS90448.1"/>
    <property type="molecule type" value="Genomic_DNA"/>
</dbReference>
<dbReference type="RefSeq" id="WP_015849666.1">
    <property type="nucleotide sequence ID" value="NC_012883.1"/>
</dbReference>
<dbReference type="SMR" id="C6A4A3"/>
<dbReference type="STRING" id="604354.TSIB_1397"/>
<dbReference type="GeneID" id="8096399"/>
<dbReference type="KEGG" id="tsi:TSIB_1397"/>
<dbReference type="eggNOG" id="arCOG00403">
    <property type="taxonomic scope" value="Archaea"/>
</dbReference>
<dbReference type="HOGENOM" id="CLU_023797_0_1_2"/>
<dbReference type="OrthoDB" id="35932at2157"/>
<dbReference type="UniPathway" id="UPA00906">
    <property type="reaction ID" value="UER00895"/>
</dbReference>
<dbReference type="Proteomes" id="UP000009079">
    <property type="component" value="Chromosome"/>
</dbReference>
<dbReference type="GO" id="GO:0005737">
    <property type="term" value="C:cytoplasm"/>
    <property type="evidence" value="ECO:0007669"/>
    <property type="project" value="UniProtKB-SubCell"/>
</dbReference>
<dbReference type="GO" id="GO:0005524">
    <property type="term" value="F:ATP binding"/>
    <property type="evidence" value="ECO:0007669"/>
    <property type="project" value="UniProtKB-UniRule"/>
</dbReference>
<dbReference type="GO" id="GO:0004828">
    <property type="term" value="F:serine-tRNA ligase activity"/>
    <property type="evidence" value="ECO:0007669"/>
    <property type="project" value="UniProtKB-UniRule"/>
</dbReference>
<dbReference type="GO" id="GO:0016260">
    <property type="term" value="P:selenocysteine biosynthetic process"/>
    <property type="evidence" value="ECO:0007669"/>
    <property type="project" value="UniProtKB-UniRule"/>
</dbReference>
<dbReference type="GO" id="GO:0006434">
    <property type="term" value="P:seryl-tRNA aminoacylation"/>
    <property type="evidence" value="ECO:0007669"/>
    <property type="project" value="UniProtKB-UniRule"/>
</dbReference>
<dbReference type="CDD" id="cd00770">
    <property type="entry name" value="SerRS_core"/>
    <property type="match status" value="1"/>
</dbReference>
<dbReference type="FunFam" id="3.30.930.10:FF:000048">
    <property type="entry name" value="Serine--tRNA ligase"/>
    <property type="match status" value="1"/>
</dbReference>
<dbReference type="Gene3D" id="3.30.930.10">
    <property type="entry name" value="Bira Bifunctional Protein, Domain 2"/>
    <property type="match status" value="1"/>
</dbReference>
<dbReference type="Gene3D" id="1.10.287.40">
    <property type="entry name" value="Serine-tRNA synthetase, tRNA binding domain"/>
    <property type="match status" value="1"/>
</dbReference>
<dbReference type="HAMAP" id="MF_00176">
    <property type="entry name" value="Ser_tRNA_synth_type1"/>
    <property type="match status" value="1"/>
</dbReference>
<dbReference type="InterPro" id="IPR002314">
    <property type="entry name" value="aa-tRNA-synt_IIb"/>
</dbReference>
<dbReference type="InterPro" id="IPR006195">
    <property type="entry name" value="aa-tRNA-synth_II"/>
</dbReference>
<dbReference type="InterPro" id="IPR045864">
    <property type="entry name" value="aa-tRNA-synth_II/BPL/LPL"/>
</dbReference>
<dbReference type="InterPro" id="IPR002317">
    <property type="entry name" value="Ser-tRNA-ligase_type_1"/>
</dbReference>
<dbReference type="InterPro" id="IPR015866">
    <property type="entry name" value="Ser-tRNA-synth_1_N"/>
</dbReference>
<dbReference type="InterPro" id="IPR042103">
    <property type="entry name" value="SerRS_1_N_sf"/>
</dbReference>
<dbReference type="InterPro" id="IPR033729">
    <property type="entry name" value="SerRS_core"/>
</dbReference>
<dbReference type="InterPro" id="IPR010978">
    <property type="entry name" value="tRNA-bd_arm"/>
</dbReference>
<dbReference type="NCBIfam" id="TIGR00414">
    <property type="entry name" value="serS"/>
    <property type="match status" value="1"/>
</dbReference>
<dbReference type="PANTHER" id="PTHR11778">
    <property type="entry name" value="SERYL-TRNA SYNTHETASE"/>
    <property type="match status" value="1"/>
</dbReference>
<dbReference type="Pfam" id="PF02403">
    <property type="entry name" value="Seryl_tRNA_N"/>
    <property type="match status" value="1"/>
</dbReference>
<dbReference type="Pfam" id="PF00587">
    <property type="entry name" value="tRNA-synt_2b"/>
    <property type="match status" value="1"/>
</dbReference>
<dbReference type="PIRSF" id="PIRSF001529">
    <property type="entry name" value="Ser-tRNA-synth_IIa"/>
    <property type="match status" value="1"/>
</dbReference>
<dbReference type="PRINTS" id="PR00981">
    <property type="entry name" value="TRNASYNTHSER"/>
</dbReference>
<dbReference type="SUPFAM" id="SSF55681">
    <property type="entry name" value="Class II aaRS and biotin synthetases"/>
    <property type="match status" value="1"/>
</dbReference>
<dbReference type="SUPFAM" id="SSF46589">
    <property type="entry name" value="tRNA-binding arm"/>
    <property type="match status" value="1"/>
</dbReference>
<dbReference type="PROSITE" id="PS50862">
    <property type="entry name" value="AA_TRNA_LIGASE_II"/>
    <property type="match status" value="1"/>
</dbReference>
<accession>C6A4A3</accession>
<name>SYS_THESM</name>
<keyword id="KW-0030">Aminoacyl-tRNA synthetase</keyword>
<keyword id="KW-0067">ATP-binding</keyword>
<keyword id="KW-0963">Cytoplasm</keyword>
<keyword id="KW-0436">Ligase</keyword>
<keyword id="KW-0547">Nucleotide-binding</keyword>
<keyword id="KW-0648">Protein biosynthesis</keyword>
<keyword id="KW-1185">Reference proteome</keyword>
<protein>
    <recommendedName>
        <fullName evidence="1">Serine--tRNA ligase</fullName>
        <ecNumber evidence="1">6.1.1.11</ecNumber>
    </recommendedName>
    <alternativeName>
        <fullName evidence="1">Seryl-tRNA synthetase</fullName>
        <shortName evidence="1">SerRS</shortName>
    </alternativeName>
    <alternativeName>
        <fullName evidence="1">Seryl-tRNA(Ser/Sec) synthetase</fullName>
    </alternativeName>
</protein>
<evidence type="ECO:0000255" key="1">
    <source>
        <dbReference type="HAMAP-Rule" id="MF_00176"/>
    </source>
</evidence>
<proteinExistence type="inferred from homology"/>
<sequence>MIDIKLIRENPDLIKGDLIKRGELEKLRWIDEILELDKKWRENLKEINNLRRERNKLAIEIGKRKKSGEAIDELIKKSDNIAKRIEEIEKENNIIREKIDYYLWRLPNITHESVPIGKDDTENVPIRFWGKARVWEGHLETFLEQSQGKMKYETITWKPELHADLLPKIGGADLERAAKVSGARFFYLLNELVILDLSLIRFALDKLIEKGFIPVIPPYMVRKYVEEGVTSFGDFEDVIYKIEGEDLYLIPTSEHPLAGMHSNEILDGHNLPILYAGVSPCFRKEAGTAGKDTKGIFRVHQFHKVEQFVYARPEESWEWHEKLLQNAEEIFQALEIPYRIVNICTGDLGYAAAKKYDIEAWMSAQGKFREVVSCSNCTEWQARRLNIRFRDKPNEKPRFVHTLNSTAIATSRAIVAIIENFQEEDGTVKIPKALWPYTGFKEILPVDKREKCCQS</sequence>